<name>GATA_CANAW</name>
<reference key="1">
    <citation type="journal article" date="2009" name="Nature">
        <title>Evolution of pathogenicity and sexual reproduction in eight Candida genomes.</title>
        <authorList>
            <person name="Butler G."/>
            <person name="Rasmussen M.D."/>
            <person name="Lin M.F."/>
            <person name="Santos M.A.S."/>
            <person name="Sakthikumar S."/>
            <person name="Munro C.A."/>
            <person name="Rheinbay E."/>
            <person name="Grabherr M."/>
            <person name="Forche A."/>
            <person name="Reedy J.L."/>
            <person name="Agrafioti I."/>
            <person name="Arnaud M.B."/>
            <person name="Bates S."/>
            <person name="Brown A.J.P."/>
            <person name="Brunke S."/>
            <person name="Costanzo M.C."/>
            <person name="Fitzpatrick D.A."/>
            <person name="de Groot P.W.J."/>
            <person name="Harris D."/>
            <person name="Hoyer L.L."/>
            <person name="Hube B."/>
            <person name="Klis F.M."/>
            <person name="Kodira C."/>
            <person name="Lennard N."/>
            <person name="Logue M.E."/>
            <person name="Martin R."/>
            <person name="Neiman A.M."/>
            <person name="Nikolaou E."/>
            <person name="Quail M.A."/>
            <person name="Quinn J."/>
            <person name="Santos M.C."/>
            <person name="Schmitzberger F.F."/>
            <person name="Sherlock G."/>
            <person name="Shah P."/>
            <person name="Silverstein K.A.T."/>
            <person name="Skrzypek M.S."/>
            <person name="Soll D."/>
            <person name="Staggs R."/>
            <person name="Stansfield I."/>
            <person name="Stumpf M.P.H."/>
            <person name="Sudbery P.E."/>
            <person name="Srikantha T."/>
            <person name="Zeng Q."/>
            <person name="Berman J."/>
            <person name="Berriman M."/>
            <person name="Heitman J."/>
            <person name="Gow N.A.R."/>
            <person name="Lorenz M.C."/>
            <person name="Birren B.W."/>
            <person name="Kellis M."/>
            <person name="Cuomo C.A."/>
        </authorList>
    </citation>
    <scope>NUCLEOTIDE SEQUENCE [LARGE SCALE GENOMIC DNA]</scope>
    <source>
        <strain>WO-1</strain>
    </source>
</reference>
<sequence>MRKTLTSIRFLSDGIRVKDKWNSLISDLVVEPTNSTGPLSGTTYIVKDNIATSHGYTTAASKILSNYESPFNATIIDLLSSNGSKLIGKSNLDEFGMGSANYNSYFNKVTNPYDNTKVPGGSSGGSAASVAGKMCSFSIGTDTGGSVRLPASYCNVFGFKPTYGRISRWGVIPYAQTLDTVGIIGENVNIIKRVYDVLNKYDDKDPTCLPEEVRQKIPTTKKETLTIGVPHEFVLKELSADVRESWEYALSKICKLGHLVKPISIKTIKKALPSYYTLATAEAASNLSRYDSIRYGYNTNESVNSPIELIATNRSDGFGSEVQRRILLGNYTLSSDSGDHYLRATQIREELCAEFSSIFNNSHVLLQDEQSSDKVDLIMAPTSTSTAPTWDEFVSANEKNFLNSYVNDVLTVPASLAGIPAISVPVNGIGIQLMGQFGDDDLVLQLADQI</sequence>
<dbReference type="EC" id="6.3.5.7" evidence="1"/>
<dbReference type="EMBL" id="CM000311">
    <property type="protein sequence ID" value="EEQ46483.1"/>
    <property type="molecule type" value="Genomic_DNA"/>
</dbReference>
<dbReference type="SMR" id="C4YRY0"/>
<dbReference type="PaxDb" id="5476-C4YRY0"/>
<dbReference type="VEuPathDB" id="FungiDB:CAWG_04838"/>
<dbReference type="HOGENOM" id="CLU_009600_0_3_1"/>
<dbReference type="OMA" id="QPASYCG"/>
<dbReference type="OrthoDB" id="24361at766764"/>
<dbReference type="Proteomes" id="UP000001429">
    <property type="component" value="Chromosome 5"/>
</dbReference>
<dbReference type="GO" id="GO:0030956">
    <property type="term" value="C:glutamyl-tRNA(Gln) amidotransferase complex"/>
    <property type="evidence" value="ECO:0007669"/>
    <property type="project" value="UniProtKB-UniRule"/>
</dbReference>
<dbReference type="GO" id="GO:0005739">
    <property type="term" value="C:mitochondrion"/>
    <property type="evidence" value="ECO:0007669"/>
    <property type="project" value="UniProtKB-SubCell"/>
</dbReference>
<dbReference type="GO" id="GO:0005524">
    <property type="term" value="F:ATP binding"/>
    <property type="evidence" value="ECO:0007669"/>
    <property type="project" value="UniProtKB-KW"/>
</dbReference>
<dbReference type="GO" id="GO:0050567">
    <property type="term" value="F:glutaminyl-tRNA synthase (glutamine-hydrolyzing) activity"/>
    <property type="evidence" value="ECO:0007669"/>
    <property type="project" value="UniProtKB-UniRule"/>
</dbReference>
<dbReference type="GO" id="GO:0070681">
    <property type="term" value="P:glutaminyl-tRNAGln biosynthesis via transamidation"/>
    <property type="evidence" value="ECO:0007669"/>
    <property type="project" value="UniProtKB-UniRule"/>
</dbReference>
<dbReference type="GO" id="GO:0032543">
    <property type="term" value="P:mitochondrial translation"/>
    <property type="evidence" value="ECO:0007669"/>
    <property type="project" value="UniProtKB-UniRule"/>
</dbReference>
<dbReference type="Gene3D" id="3.90.1300.10">
    <property type="entry name" value="Amidase signature (AS) domain"/>
    <property type="match status" value="1"/>
</dbReference>
<dbReference type="HAMAP" id="MF_00120">
    <property type="entry name" value="GatA"/>
    <property type="match status" value="1"/>
</dbReference>
<dbReference type="InterPro" id="IPR000120">
    <property type="entry name" value="Amidase"/>
</dbReference>
<dbReference type="InterPro" id="IPR020556">
    <property type="entry name" value="Amidase_CS"/>
</dbReference>
<dbReference type="InterPro" id="IPR023631">
    <property type="entry name" value="Amidase_dom"/>
</dbReference>
<dbReference type="InterPro" id="IPR036928">
    <property type="entry name" value="AS_sf"/>
</dbReference>
<dbReference type="InterPro" id="IPR004412">
    <property type="entry name" value="GatA"/>
</dbReference>
<dbReference type="PANTHER" id="PTHR11895:SF7">
    <property type="entry name" value="GLUTAMYL-TRNA(GLN) AMIDOTRANSFERASE SUBUNIT A, MITOCHONDRIAL"/>
    <property type="match status" value="1"/>
</dbReference>
<dbReference type="PANTHER" id="PTHR11895">
    <property type="entry name" value="TRANSAMIDASE"/>
    <property type="match status" value="1"/>
</dbReference>
<dbReference type="Pfam" id="PF01425">
    <property type="entry name" value="Amidase"/>
    <property type="match status" value="1"/>
</dbReference>
<dbReference type="SUPFAM" id="SSF75304">
    <property type="entry name" value="Amidase signature (AS) enzymes"/>
    <property type="match status" value="1"/>
</dbReference>
<dbReference type="PROSITE" id="PS00571">
    <property type="entry name" value="AMIDASES"/>
    <property type="match status" value="1"/>
</dbReference>
<feature type="chain" id="PRO_0000413350" description="Glutamyl-tRNA(Gln) amidotransferase subunit A, mitochondrial">
    <location>
        <begin position="1"/>
        <end position="450"/>
    </location>
</feature>
<feature type="active site" description="Charge relay system" evidence="1">
    <location>
        <position position="47"/>
    </location>
</feature>
<feature type="active site" description="Charge relay system" evidence="1">
    <location>
        <position position="122"/>
    </location>
</feature>
<feature type="active site" description="Acyl-ester intermediate" evidence="1">
    <location>
        <position position="146"/>
    </location>
</feature>
<comment type="function">
    <text evidence="1">Allows the formation of correctly charged Gln-tRNA(Gln) through the transamidation of misacylated Glu-tRNA(Gln) in the mitochondria. The reaction takes place in the presence of glutamine and ATP through an activated gamma-phospho-Glu-tRNA(Gln).</text>
</comment>
<comment type="catalytic activity">
    <reaction evidence="1">
        <text>L-glutamyl-tRNA(Gln) + L-glutamine + ATP + H2O = L-glutaminyl-tRNA(Gln) + L-glutamate + ADP + phosphate + H(+)</text>
        <dbReference type="Rhea" id="RHEA:17521"/>
        <dbReference type="Rhea" id="RHEA-COMP:9681"/>
        <dbReference type="Rhea" id="RHEA-COMP:9684"/>
        <dbReference type="ChEBI" id="CHEBI:15377"/>
        <dbReference type="ChEBI" id="CHEBI:15378"/>
        <dbReference type="ChEBI" id="CHEBI:29985"/>
        <dbReference type="ChEBI" id="CHEBI:30616"/>
        <dbReference type="ChEBI" id="CHEBI:43474"/>
        <dbReference type="ChEBI" id="CHEBI:58359"/>
        <dbReference type="ChEBI" id="CHEBI:78520"/>
        <dbReference type="ChEBI" id="CHEBI:78521"/>
        <dbReference type="ChEBI" id="CHEBI:456216"/>
        <dbReference type="EC" id="6.3.5.7"/>
    </reaction>
</comment>
<comment type="subunit">
    <text evidence="1">Subunit of the heterotrimeric GatFAB amidotransferase (AdT) complex, composed of A, B and F subunits.</text>
</comment>
<comment type="subcellular location">
    <subcellularLocation>
        <location evidence="1">Mitochondrion</location>
    </subcellularLocation>
</comment>
<comment type="similarity">
    <text evidence="1">Belongs to the amidase family. GatA subfamily.</text>
</comment>
<keyword id="KW-0067">ATP-binding</keyword>
<keyword id="KW-0436">Ligase</keyword>
<keyword id="KW-0496">Mitochondrion</keyword>
<keyword id="KW-0547">Nucleotide-binding</keyword>
<keyword id="KW-0648">Protein biosynthesis</keyword>
<organism>
    <name type="scientific">Candida albicans (strain WO-1)</name>
    <name type="common">Yeast</name>
    <dbReference type="NCBI Taxonomy" id="294748"/>
    <lineage>
        <taxon>Eukaryota</taxon>
        <taxon>Fungi</taxon>
        <taxon>Dikarya</taxon>
        <taxon>Ascomycota</taxon>
        <taxon>Saccharomycotina</taxon>
        <taxon>Pichiomycetes</taxon>
        <taxon>Debaryomycetaceae</taxon>
        <taxon>Candida/Lodderomyces clade</taxon>
        <taxon>Candida</taxon>
    </lineage>
</organism>
<protein>
    <recommendedName>
        <fullName evidence="1">Glutamyl-tRNA(Gln) amidotransferase subunit A, mitochondrial</fullName>
        <shortName evidence="1">Glu-AdT subunit A</shortName>
        <ecNumber evidence="1">6.3.5.7</ecNumber>
    </recommendedName>
</protein>
<proteinExistence type="inferred from homology"/>
<evidence type="ECO:0000255" key="1">
    <source>
        <dbReference type="HAMAP-Rule" id="MF_03150"/>
    </source>
</evidence>
<accession>C4YRY0</accession>
<gene>
    <name evidence="1" type="primary">HER2</name>
    <name type="ORF">CAWG_04838</name>
</gene>